<name>PDPR_HUMAN</name>
<comment type="function">
    <text evidence="1">Decreases the sensitivity of PDP1 to magnesium ions, and this inhibition is reversed by the polyamine spermine.</text>
</comment>
<comment type="subunit">
    <text evidence="1">Heterodimer of a catalytic (PDP1) and a regulatory (PDPR) subunit.</text>
</comment>
<comment type="subcellular location">
    <subcellularLocation>
        <location evidence="1">Mitochondrion matrix</location>
    </subcellularLocation>
</comment>
<comment type="alternative products">
    <event type="alternative splicing"/>
    <isoform>
        <id>Q8NCN5-1</id>
        <name>1</name>
        <sequence type="displayed"/>
    </isoform>
    <isoform>
        <id>Q8NCN5-2</id>
        <name>2</name>
        <sequence type="described" ref="VSP_056077"/>
    </isoform>
</comment>
<comment type="similarity">
    <text evidence="4">Belongs to the GcvT family.</text>
</comment>
<comment type="caution">
    <text evidence="4">It is uncertain whether Met-1 or Met-2 is the initiator.</text>
</comment>
<comment type="sequence caution" evidence="4">
    <conflict type="erroneous initiation">
        <sequence resource="EMBL-CDS" id="BAC02699"/>
    </conflict>
</comment>
<comment type="sequence caution" evidence="4">
    <conflict type="erroneous initiation">
        <sequence resource="EMBL-CDS" id="BAF85191"/>
    </conflict>
</comment>
<feature type="transit peptide" description="Mitochondrion" evidence="2">
    <location>
        <begin position="1"/>
        <end position="27"/>
    </location>
</feature>
<feature type="chain" id="PRO_0000328740" description="Pyruvate dehydrogenase phosphatase regulatory subunit, mitochondrial">
    <location>
        <begin position="28"/>
        <end position="879"/>
    </location>
</feature>
<feature type="splice variant" id="VSP_056077" description="In isoform 2." evidence="3">
    <location>
        <begin position="1"/>
        <end position="655"/>
    </location>
</feature>
<feature type="sequence variant" id="VAR_042504" description="In dbSNP:rs2549532.">
    <original>Y</original>
    <variation>H</variation>
    <location>
        <position position="109"/>
    </location>
</feature>
<feature type="sequence conflict" description="In Ref. 3; CAH10555." evidence="4" ref="3">
    <original>T</original>
    <variation>A</variation>
    <location>
        <position position="29"/>
    </location>
</feature>
<feature type="sequence conflict" description="In Ref. 3; CAH10555." evidence="4" ref="3">
    <original>I</original>
    <variation>V</variation>
    <location>
        <position position="47"/>
    </location>
</feature>
<feature type="sequence conflict" description="In Ref. 3; CAH10555." evidence="4" ref="3">
    <original>YHL</original>
    <variation>HHQ</variation>
    <location>
        <begin position="59"/>
        <end position="61"/>
    </location>
</feature>
<feature type="sequence conflict" description="In Ref. 2; BAF85191 and 3; CAH10555." evidence="4" ref="2 3">
    <original>Y</original>
    <variation>H</variation>
    <location>
        <position position="110"/>
    </location>
</feature>
<feature type="sequence conflict" description="In Ref. 3; CAH10555." evidence="4" ref="3">
    <original>V</original>
    <variation>A</variation>
    <location>
        <position position="171"/>
    </location>
</feature>
<feature type="sequence conflict" description="In Ref. 3; CAH10555." evidence="4" ref="3">
    <original>I</original>
    <variation>V</variation>
    <location>
        <position position="206"/>
    </location>
</feature>
<feature type="sequence conflict" description="In Ref. 2; BAF85191." evidence="4" ref="2">
    <original>T</original>
    <variation>A</variation>
    <location>
        <position position="210"/>
    </location>
</feature>
<feature type="sequence conflict" description="In Ref. 3; CAH10494." evidence="4" ref="3">
    <original>I</original>
    <variation>T</variation>
    <location>
        <position position="284"/>
    </location>
</feature>
<feature type="sequence conflict" description="In Ref. 3; CAH10494." evidence="4" ref="3">
    <original>V</original>
    <variation>A</variation>
    <location>
        <position position="355"/>
    </location>
</feature>
<feature type="sequence conflict" description="In Ref. 3; CAH10555." evidence="4" ref="3">
    <original>P</original>
    <variation>S</variation>
    <location>
        <position position="363"/>
    </location>
</feature>
<feature type="sequence conflict" description="In Ref. 3; CAH10494." evidence="4" ref="3">
    <original>Q</original>
    <variation>R</variation>
    <location>
        <position position="497"/>
    </location>
</feature>
<feature type="sequence conflict" description="In Ref. 2; BAF85191." evidence="4" ref="2">
    <original>H</original>
    <variation>D</variation>
    <location>
        <position position="597"/>
    </location>
</feature>
<feature type="sequence conflict" description="In Ref. 3; CAH10555." evidence="4" ref="3">
    <original>N</original>
    <variation>K</variation>
    <location>
        <position position="662"/>
    </location>
</feature>
<dbReference type="EMBL" id="AB082521">
    <property type="protein sequence ID" value="BAC02699.1"/>
    <property type="status" value="ALT_INIT"/>
    <property type="molecule type" value="mRNA"/>
</dbReference>
<dbReference type="EMBL" id="AK093391">
    <property type="protein sequence ID" value="BAG52703.1"/>
    <property type="molecule type" value="mRNA"/>
</dbReference>
<dbReference type="EMBL" id="AK292502">
    <property type="protein sequence ID" value="BAF85191.1"/>
    <property type="status" value="ALT_INIT"/>
    <property type="molecule type" value="mRNA"/>
</dbReference>
<dbReference type="EMBL" id="BX538153">
    <property type="protein sequence ID" value="CAH10555.1"/>
    <property type="molecule type" value="mRNA"/>
</dbReference>
<dbReference type="EMBL" id="CR627404">
    <property type="protein sequence ID" value="CAH10494.1"/>
    <property type="molecule type" value="mRNA"/>
</dbReference>
<dbReference type="EMBL" id="AC009022">
    <property type="status" value="NOT_ANNOTATED_CDS"/>
    <property type="molecule type" value="Genomic_DNA"/>
</dbReference>
<dbReference type="EMBL" id="AC009060">
    <property type="status" value="NOT_ANNOTATED_CDS"/>
    <property type="molecule type" value="Genomic_DNA"/>
</dbReference>
<dbReference type="EMBL" id="BC150251">
    <property type="protein sequence ID" value="AAI50252.1"/>
    <property type="molecule type" value="mRNA"/>
</dbReference>
<dbReference type="CCDS" id="CCDS45520.1">
    <molecule id="Q8NCN5-1"/>
</dbReference>
<dbReference type="RefSeq" id="NP_001309046.1">
    <molecule id="Q8NCN5-1"/>
    <property type="nucleotide sequence ID" value="NM_001322117.1"/>
</dbReference>
<dbReference type="RefSeq" id="NP_060460.4">
    <molecule id="Q8NCN5-1"/>
    <property type="nucleotide sequence ID" value="NM_017990.4"/>
</dbReference>
<dbReference type="RefSeq" id="XP_005256072.1">
    <molecule id="Q8NCN5-1"/>
    <property type="nucleotide sequence ID" value="XM_005256015.3"/>
</dbReference>
<dbReference type="RefSeq" id="XP_005256073.1">
    <molecule id="Q8NCN5-1"/>
    <property type="nucleotide sequence ID" value="XM_005256016.4"/>
</dbReference>
<dbReference type="RefSeq" id="XP_016878876.1">
    <property type="nucleotide sequence ID" value="XM_017023387.1"/>
</dbReference>
<dbReference type="RefSeq" id="XP_047290258.1">
    <molecule id="Q8NCN5-1"/>
    <property type="nucleotide sequence ID" value="XM_047434302.1"/>
</dbReference>
<dbReference type="PDB" id="8FHL">
    <property type="method" value="X-ray"/>
    <property type="resolution" value="2.19 A"/>
    <property type="chains" value="C=627-635"/>
</dbReference>
<dbReference type="PDB" id="8FHU">
    <property type="method" value="X-ray"/>
    <property type="resolution" value="1.80 A"/>
    <property type="chains" value="C/F=627-635"/>
</dbReference>
<dbReference type="PDBsum" id="8FHL"/>
<dbReference type="PDBsum" id="8FHU"/>
<dbReference type="SMR" id="Q8NCN5"/>
<dbReference type="BioGRID" id="120384">
    <property type="interactions" value="101"/>
</dbReference>
<dbReference type="ComplexPortal" id="CPX-6261">
    <property type="entry name" value="Mitochondrial pyruvate dehydrogenase serine/threonine phosphatase complex"/>
</dbReference>
<dbReference type="FunCoup" id="Q8NCN5">
    <property type="interactions" value="1846"/>
</dbReference>
<dbReference type="IntAct" id="Q8NCN5">
    <property type="interactions" value="31"/>
</dbReference>
<dbReference type="MINT" id="Q8NCN5"/>
<dbReference type="STRING" id="9606.ENSP00000288050"/>
<dbReference type="GlyGen" id="Q8NCN5">
    <property type="glycosylation" value="1 site, 1 O-linked glycan (1 site)"/>
</dbReference>
<dbReference type="iPTMnet" id="Q8NCN5"/>
<dbReference type="PhosphoSitePlus" id="Q8NCN5"/>
<dbReference type="SwissPalm" id="Q8NCN5"/>
<dbReference type="BioMuta" id="PDPR"/>
<dbReference type="DMDM" id="182668644"/>
<dbReference type="jPOST" id="Q8NCN5"/>
<dbReference type="MassIVE" id="Q8NCN5"/>
<dbReference type="PaxDb" id="9606-ENSP00000288050"/>
<dbReference type="PeptideAtlas" id="Q8NCN5"/>
<dbReference type="ProteomicsDB" id="3633"/>
<dbReference type="ProteomicsDB" id="72914">
    <molecule id="Q8NCN5-1"/>
</dbReference>
<dbReference type="Pumba" id="Q8NCN5"/>
<dbReference type="Antibodypedia" id="66437">
    <property type="antibodies" value="65 antibodies from 15 providers"/>
</dbReference>
<dbReference type="DNASU" id="55066"/>
<dbReference type="Ensembl" id="ENST00000288050.9">
    <molecule id="Q8NCN5-1"/>
    <property type="protein sequence ID" value="ENSP00000288050.5"/>
    <property type="gene ID" value="ENSG00000090857.14"/>
</dbReference>
<dbReference type="Ensembl" id="ENST00000568530.5">
    <molecule id="Q8NCN5-1"/>
    <property type="protein sequence ID" value="ENSP00000457916.1"/>
    <property type="gene ID" value="ENSG00000090857.14"/>
</dbReference>
<dbReference type="GeneID" id="55066"/>
<dbReference type="KEGG" id="hsa:55066"/>
<dbReference type="MANE-Select" id="ENST00000288050.9">
    <property type="protein sequence ID" value="ENSP00000288050.5"/>
    <property type="RefSeq nucleotide sequence ID" value="NM_017990.5"/>
    <property type="RefSeq protein sequence ID" value="NP_060460.4"/>
</dbReference>
<dbReference type="UCSC" id="uc002eyf.2">
    <molecule id="Q8NCN5-1"/>
    <property type="organism name" value="human"/>
</dbReference>
<dbReference type="AGR" id="HGNC:30264"/>
<dbReference type="CTD" id="55066"/>
<dbReference type="DisGeNET" id="55066"/>
<dbReference type="GeneCards" id="PDPR"/>
<dbReference type="HGNC" id="HGNC:30264">
    <property type="gene designation" value="PDPR"/>
</dbReference>
<dbReference type="HPA" id="ENSG00000090857">
    <property type="expression patterns" value="Low tissue specificity"/>
</dbReference>
<dbReference type="MalaCards" id="PDPR"/>
<dbReference type="MIM" id="617835">
    <property type="type" value="gene"/>
</dbReference>
<dbReference type="neXtProt" id="NX_Q8NCN5"/>
<dbReference type="OpenTargets" id="ENSG00000090857"/>
<dbReference type="VEuPathDB" id="HostDB:ENSG00000090857"/>
<dbReference type="eggNOG" id="KOG2844">
    <property type="taxonomic scope" value="Eukaryota"/>
</dbReference>
<dbReference type="GeneTree" id="ENSGT00940000159082"/>
<dbReference type="InParanoid" id="Q8NCN5"/>
<dbReference type="OMA" id="TKFPDRE"/>
<dbReference type="OrthoDB" id="429143at2759"/>
<dbReference type="PAN-GO" id="Q8NCN5">
    <property type="GO annotations" value="4 GO annotations based on evolutionary models"/>
</dbReference>
<dbReference type="PhylomeDB" id="Q8NCN5"/>
<dbReference type="TreeFam" id="TF314735"/>
<dbReference type="BRENDA" id="3.1.3.43">
    <property type="organism ID" value="2681"/>
</dbReference>
<dbReference type="PathwayCommons" id="Q8NCN5"/>
<dbReference type="Reactome" id="R-HSA-204174">
    <property type="pathway name" value="Regulation of pyruvate dehydrogenase (PDH) complex"/>
</dbReference>
<dbReference type="SignaLink" id="Q8NCN5"/>
<dbReference type="BioGRID-ORCS" id="55066">
    <property type="hits" value="23 hits in 1161 CRISPR screens"/>
</dbReference>
<dbReference type="ChiTaRS" id="PDPR">
    <property type="organism name" value="human"/>
</dbReference>
<dbReference type="GenomeRNAi" id="55066"/>
<dbReference type="Pharos" id="Q8NCN5">
    <property type="development level" value="Tbio"/>
</dbReference>
<dbReference type="PRO" id="PR:Q8NCN5"/>
<dbReference type="Proteomes" id="UP000005640">
    <property type="component" value="Chromosome 16"/>
</dbReference>
<dbReference type="RNAct" id="Q8NCN5">
    <property type="molecule type" value="protein"/>
</dbReference>
<dbReference type="Bgee" id="ENSG00000090857">
    <property type="expression patterns" value="Expressed in secondary oocyte and 181 other cell types or tissues"/>
</dbReference>
<dbReference type="ExpressionAtlas" id="Q8NCN5">
    <property type="expression patterns" value="baseline and differential"/>
</dbReference>
<dbReference type="GO" id="GO:0005737">
    <property type="term" value="C:cytoplasm"/>
    <property type="evidence" value="ECO:0000318"/>
    <property type="project" value="GO_Central"/>
</dbReference>
<dbReference type="GO" id="GO:0005759">
    <property type="term" value="C:mitochondrial matrix"/>
    <property type="evidence" value="ECO:0000318"/>
    <property type="project" value="GO_Central"/>
</dbReference>
<dbReference type="GO" id="GO:0005739">
    <property type="term" value="C:mitochondrion"/>
    <property type="evidence" value="ECO:0006056"/>
    <property type="project" value="FlyBase"/>
</dbReference>
<dbReference type="GO" id="GO:0045253">
    <property type="term" value="C:pyruvate dehydrogenase (lipoamide) phosphatase complex"/>
    <property type="evidence" value="ECO:0000303"/>
    <property type="project" value="ComplexPortal"/>
</dbReference>
<dbReference type="FunFam" id="3.30.1360.120:FF:000046">
    <property type="entry name" value="Pyruvate dehydrogenase phosphatase regulatory mitochondrial"/>
    <property type="match status" value="1"/>
</dbReference>
<dbReference type="FunFam" id="3.30.70.1400:FF:000003">
    <property type="entry name" value="Pyruvate dehydrogenase phosphatase regulatory subunit"/>
    <property type="match status" value="1"/>
</dbReference>
<dbReference type="FunFam" id="2.40.30.110:FF:000004">
    <property type="entry name" value="Pyruvate dehydrogenase phosphatase regulatory subunit, mitochondrial"/>
    <property type="match status" value="1"/>
</dbReference>
<dbReference type="Gene3D" id="2.40.30.110">
    <property type="entry name" value="Aminomethyltransferase beta-barrel domains"/>
    <property type="match status" value="1"/>
</dbReference>
<dbReference type="Gene3D" id="3.30.70.1400">
    <property type="entry name" value="Aminomethyltransferase beta-barrel domains"/>
    <property type="match status" value="1"/>
</dbReference>
<dbReference type="Gene3D" id="3.30.9.10">
    <property type="entry name" value="D-Amino Acid Oxidase, subunit A, domain 2"/>
    <property type="match status" value="1"/>
</dbReference>
<dbReference type="Gene3D" id="3.50.50.60">
    <property type="entry name" value="FAD/NAD(P)-binding domain"/>
    <property type="match status" value="1"/>
</dbReference>
<dbReference type="Gene3D" id="3.30.1360.120">
    <property type="entry name" value="Probable tRNA modification gtpase trme, domain 1"/>
    <property type="match status" value="1"/>
</dbReference>
<dbReference type="InterPro" id="IPR006076">
    <property type="entry name" value="FAD-dep_OxRdtase"/>
</dbReference>
<dbReference type="InterPro" id="IPR036188">
    <property type="entry name" value="FAD/NAD-bd_sf"/>
</dbReference>
<dbReference type="InterPro" id="IPR032503">
    <property type="entry name" value="FAO_M"/>
</dbReference>
<dbReference type="InterPro" id="IPR013977">
    <property type="entry name" value="GCST_C"/>
</dbReference>
<dbReference type="InterPro" id="IPR006222">
    <property type="entry name" value="GCV_T_N"/>
</dbReference>
<dbReference type="InterPro" id="IPR028896">
    <property type="entry name" value="GcvT/YgfZ/DmdA"/>
</dbReference>
<dbReference type="InterPro" id="IPR029043">
    <property type="entry name" value="GcvT/YgfZ_C"/>
</dbReference>
<dbReference type="InterPro" id="IPR001763">
    <property type="entry name" value="Rhodanese-like_dom"/>
</dbReference>
<dbReference type="InterPro" id="IPR027266">
    <property type="entry name" value="TrmE/GcvT_dom1"/>
</dbReference>
<dbReference type="PANTHER" id="PTHR43757">
    <property type="entry name" value="AMINOMETHYLTRANSFERASE"/>
    <property type="match status" value="1"/>
</dbReference>
<dbReference type="PANTHER" id="PTHR43757:SF15">
    <property type="entry name" value="PYRUVATE DEHYDROGENASE PHOSPHATASE REGULATORY SUBUNIT, MITOCHONDRIAL-LIKE"/>
    <property type="match status" value="1"/>
</dbReference>
<dbReference type="Pfam" id="PF01266">
    <property type="entry name" value="DAO"/>
    <property type="match status" value="1"/>
</dbReference>
<dbReference type="Pfam" id="PF16350">
    <property type="entry name" value="FAO_M"/>
    <property type="match status" value="1"/>
</dbReference>
<dbReference type="Pfam" id="PF01571">
    <property type="entry name" value="GCV_T"/>
    <property type="match status" value="1"/>
</dbReference>
<dbReference type="Pfam" id="PF08669">
    <property type="entry name" value="GCV_T_C"/>
    <property type="match status" value="1"/>
</dbReference>
<dbReference type="SUPFAM" id="SSF101790">
    <property type="entry name" value="Aminomethyltransferase beta-barrel domain"/>
    <property type="match status" value="1"/>
</dbReference>
<dbReference type="SUPFAM" id="SSF54373">
    <property type="entry name" value="FAD-linked reductases, C-terminal domain"/>
    <property type="match status" value="1"/>
</dbReference>
<dbReference type="SUPFAM" id="SSF51905">
    <property type="entry name" value="FAD/NAD(P)-binding domain"/>
    <property type="match status" value="1"/>
</dbReference>
<dbReference type="SUPFAM" id="SSF103025">
    <property type="entry name" value="Folate-binding domain"/>
    <property type="match status" value="1"/>
</dbReference>
<sequence>MMFYRLLSIVGRQRASPGWQNWSSARNSTSAAEARSMALPTQAQVVICGGGITGTSVAYHLSKMGWKDIVLLEQGRLAAGSTRFCAGILSTARHLTIEQKMADYSNKLYYQLEQETGIQTGYTRTGSIFLAQTQDRLISLKRINAGLNVIGIPSEIISPKKVAELHHLLNVHDLVGAMHVPEDAVVSSADVALALASAASQNGVQIYDRTSVLHVMVKKGQVTGVETDKGQIECQYFVNCAGQWAYELGLSNEEPVSIPLHACEHFYLLTRPLETPLQSSTPTIVDADGRIYIRNWQGGILSGGFEKNPKPIFTEGKNQLEIQNLQEDWDHFEPLLSSLLRRMPELETLEIMKLVNCPETFTPDMRCIMGESPAVQGYFVLAGMNSAGLSFGGGAGKYLAEWMVHGYPSENVWELDLKRFGALQSSRTFLRHRVMEVMPLMYDLKVPRWDFQTGRQLRTSPLYDRLDAQGARWMEKHGFERPKYFVPPDKDLLALEQSKTFYKPDWFDIVESEVKCCKEAVCVIDMSSFTKFEITSTGDQALEVLQYLFSNDLDVPVGHIVHTGMLNEGGGYENDCSIARLNKRSFFMISPTDQQVHCWAWLKKHMPKDSNLLLEDVTWKYTALNLIGPRAVDVLSELSYAPMTPDHFPSLFCKEMSVGYANGIRVMSMTHTGEPGFMLYIPIEYALHVYNEVMSVGQKYGIRNAGYYALRSLRIEKFFAFWGQDINNLTTPLECGRESRVKLEKGMDFIGRDALLQQKQNGVYKRLTMFILDDHDSDLDLWPWWGEPIYRNGQYVGKTTSSAYSYSLERHVCLGFVHNFSEDTGEEQVVTADFINRGEYEIDIAGYRFQAKAKLYPVASLFTQKRRKDDMELSDLHGK</sequence>
<organism>
    <name type="scientific">Homo sapiens</name>
    <name type="common">Human</name>
    <dbReference type="NCBI Taxonomy" id="9606"/>
    <lineage>
        <taxon>Eukaryota</taxon>
        <taxon>Metazoa</taxon>
        <taxon>Chordata</taxon>
        <taxon>Craniata</taxon>
        <taxon>Vertebrata</taxon>
        <taxon>Euteleostomi</taxon>
        <taxon>Mammalia</taxon>
        <taxon>Eutheria</taxon>
        <taxon>Euarchontoglires</taxon>
        <taxon>Primates</taxon>
        <taxon>Haplorrhini</taxon>
        <taxon>Catarrhini</taxon>
        <taxon>Hominidae</taxon>
        <taxon>Homo</taxon>
    </lineage>
</organism>
<protein>
    <recommendedName>
        <fullName>Pyruvate dehydrogenase phosphatase regulatory subunit, mitochondrial</fullName>
        <shortName>PDPr</shortName>
    </recommendedName>
</protein>
<gene>
    <name type="primary">PDPR</name>
    <name type="synonym">KIAA1990</name>
</gene>
<proteinExistence type="evidence at protein level"/>
<reference key="1">
    <citation type="journal article" date="2002" name="DNA Res.">
        <title>Characterization of size-fractionated cDNA libraries generated by the in vitro recombination-assisted method.</title>
        <authorList>
            <person name="Ohara O."/>
            <person name="Nagase T."/>
            <person name="Mitsui G."/>
            <person name="Kohga H."/>
            <person name="Kikuno R."/>
            <person name="Hiraoka S."/>
            <person name="Takahashi Y."/>
            <person name="Kitajima S."/>
            <person name="Saga Y."/>
            <person name="Koseki H."/>
        </authorList>
    </citation>
    <scope>NUCLEOTIDE SEQUENCE [LARGE SCALE MRNA] (ISOFORM 1)</scope>
    <source>
        <tissue>Brain</tissue>
    </source>
</reference>
<reference key="2">
    <citation type="journal article" date="2004" name="Nat. Genet.">
        <title>Complete sequencing and characterization of 21,243 full-length human cDNAs.</title>
        <authorList>
            <person name="Ota T."/>
            <person name="Suzuki Y."/>
            <person name="Nishikawa T."/>
            <person name="Otsuki T."/>
            <person name="Sugiyama T."/>
            <person name="Irie R."/>
            <person name="Wakamatsu A."/>
            <person name="Hayashi K."/>
            <person name="Sato H."/>
            <person name="Nagai K."/>
            <person name="Kimura K."/>
            <person name="Makita H."/>
            <person name="Sekine M."/>
            <person name="Obayashi M."/>
            <person name="Nishi T."/>
            <person name="Shibahara T."/>
            <person name="Tanaka T."/>
            <person name="Ishii S."/>
            <person name="Yamamoto J."/>
            <person name="Saito K."/>
            <person name="Kawai Y."/>
            <person name="Isono Y."/>
            <person name="Nakamura Y."/>
            <person name="Nagahari K."/>
            <person name="Murakami K."/>
            <person name="Yasuda T."/>
            <person name="Iwayanagi T."/>
            <person name="Wagatsuma M."/>
            <person name="Shiratori A."/>
            <person name="Sudo H."/>
            <person name="Hosoiri T."/>
            <person name="Kaku Y."/>
            <person name="Kodaira H."/>
            <person name="Kondo H."/>
            <person name="Sugawara M."/>
            <person name="Takahashi M."/>
            <person name="Kanda K."/>
            <person name="Yokoi T."/>
            <person name="Furuya T."/>
            <person name="Kikkawa E."/>
            <person name="Omura Y."/>
            <person name="Abe K."/>
            <person name="Kamihara K."/>
            <person name="Katsuta N."/>
            <person name="Sato K."/>
            <person name="Tanikawa M."/>
            <person name="Yamazaki M."/>
            <person name="Ninomiya K."/>
            <person name="Ishibashi T."/>
            <person name="Yamashita H."/>
            <person name="Murakawa K."/>
            <person name="Fujimori K."/>
            <person name="Tanai H."/>
            <person name="Kimata M."/>
            <person name="Watanabe M."/>
            <person name="Hiraoka S."/>
            <person name="Chiba Y."/>
            <person name="Ishida S."/>
            <person name="Ono Y."/>
            <person name="Takiguchi S."/>
            <person name="Watanabe S."/>
            <person name="Yosida M."/>
            <person name="Hotuta T."/>
            <person name="Kusano J."/>
            <person name="Kanehori K."/>
            <person name="Takahashi-Fujii A."/>
            <person name="Hara H."/>
            <person name="Tanase T.-O."/>
            <person name="Nomura Y."/>
            <person name="Togiya S."/>
            <person name="Komai F."/>
            <person name="Hara R."/>
            <person name="Takeuchi K."/>
            <person name="Arita M."/>
            <person name="Imose N."/>
            <person name="Musashino K."/>
            <person name="Yuuki H."/>
            <person name="Oshima A."/>
            <person name="Sasaki N."/>
            <person name="Aotsuka S."/>
            <person name="Yoshikawa Y."/>
            <person name="Matsunawa H."/>
            <person name="Ichihara T."/>
            <person name="Shiohata N."/>
            <person name="Sano S."/>
            <person name="Moriya S."/>
            <person name="Momiyama H."/>
            <person name="Satoh N."/>
            <person name="Takami S."/>
            <person name="Terashima Y."/>
            <person name="Suzuki O."/>
            <person name="Nakagawa S."/>
            <person name="Senoh A."/>
            <person name="Mizoguchi H."/>
            <person name="Goto Y."/>
            <person name="Shimizu F."/>
            <person name="Wakebe H."/>
            <person name="Hishigaki H."/>
            <person name="Watanabe T."/>
            <person name="Sugiyama A."/>
            <person name="Takemoto M."/>
            <person name="Kawakami B."/>
            <person name="Yamazaki M."/>
            <person name="Watanabe K."/>
            <person name="Kumagai A."/>
            <person name="Itakura S."/>
            <person name="Fukuzumi Y."/>
            <person name="Fujimori Y."/>
            <person name="Komiyama M."/>
            <person name="Tashiro H."/>
            <person name="Tanigami A."/>
            <person name="Fujiwara T."/>
            <person name="Ono T."/>
            <person name="Yamada K."/>
            <person name="Fujii Y."/>
            <person name="Ozaki K."/>
            <person name="Hirao M."/>
            <person name="Ohmori Y."/>
            <person name="Kawabata A."/>
            <person name="Hikiji T."/>
            <person name="Kobatake N."/>
            <person name="Inagaki H."/>
            <person name="Ikema Y."/>
            <person name="Okamoto S."/>
            <person name="Okitani R."/>
            <person name="Kawakami T."/>
            <person name="Noguchi S."/>
            <person name="Itoh T."/>
            <person name="Shigeta K."/>
            <person name="Senba T."/>
            <person name="Matsumura K."/>
            <person name="Nakajima Y."/>
            <person name="Mizuno T."/>
            <person name="Morinaga M."/>
            <person name="Sasaki M."/>
            <person name="Togashi T."/>
            <person name="Oyama M."/>
            <person name="Hata H."/>
            <person name="Watanabe M."/>
            <person name="Komatsu T."/>
            <person name="Mizushima-Sugano J."/>
            <person name="Satoh T."/>
            <person name="Shirai Y."/>
            <person name="Takahashi Y."/>
            <person name="Nakagawa K."/>
            <person name="Okumura K."/>
            <person name="Nagase T."/>
            <person name="Nomura N."/>
            <person name="Kikuchi H."/>
            <person name="Masuho Y."/>
            <person name="Yamashita R."/>
            <person name="Nakai K."/>
            <person name="Yada T."/>
            <person name="Nakamura Y."/>
            <person name="Ohara O."/>
            <person name="Isogai T."/>
            <person name="Sugano S."/>
        </authorList>
    </citation>
    <scope>NUCLEOTIDE SEQUENCE [LARGE SCALE MRNA] (ISOFORMS 1 AND 2)</scope>
    <source>
        <tissue>Embryo</tissue>
        <tissue>Testis</tissue>
    </source>
</reference>
<reference key="3">
    <citation type="journal article" date="2007" name="BMC Genomics">
        <title>The full-ORF clone resource of the German cDNA consortium.</title>
        <authorList>
            <person name="Bechtel S."/>
            <person name="Rosenfelder H."/>
            <person name="Duda A."/>
            <person name="Schmidt C.P."/>
            <person name="Ernst U."/>
            <person name="Wellenreuther R."/>
            <person name="Mehrle A."/>
            <person name="Schuster C."/>
            <person name="Bahr A."/>
            <person name="Bloecker H."/>
            <person name="Heubner D."/>
            <person name="Hoerlein A."/>
            <person name="Michel G."/>
            <person name="Wedler H."/>
            <person name="Koehrer K."/>
            <person name="Ottenwaelder B."/>
            <person name="Poustka A."/>
            <person name="Wiemann S."/>
            <person name="Schupp I."/>
        </authorList>
    </citation>
    <scope>NUCLEOTIDE SEQUENCE [LARGE SCALE MRNA] (ISOFORM 1)</scope>
    <source>
        <tissue>Amygdala</tissue>
        <tissue>Cervix</tissue>
    </source>
</reference>
<reference key="4">
    <citation type="journal article" date="2004" name="Nature">
        <title>The sequence and analysis of duplication-rich human chromosome 16.</title>
        <authorList>
            <person name="Martin J."/>
            <person name="Han C."/>
            <person name="Gordon L.A."/>
            <person name="Terry A."/>
            <person name="Prabhakar S."/>
            <person name="She X."/>
            <person name="Xie G."/>
            <person name="Hellsten U."/>
            <person name="Chan Y.M."/>
            <person name="Altherr M."/>
            <person name="Couronne O."/>
            <person name="Aerts A."/>
            <person name="Bajorek E."/>
            <person name="Black S."/>
            <person name="Blumer H."/>
            <person name="Branscomb E."/>
            <person name="Brown N.C."/>
            <person name="Bruno W.J."/>
            <person name="Buckingham J.M."/>
            <person name="Callen D.F."/>
            <person name="Campbell C.S."/>
            <person name="Campbell M.L."/>
            <person name="Campbell E.W."/>
            <person name="Caoile C."/>
            <person name="Challacombe J.F."/>
            <person name="Chasteen L.A."/>
            <person name="Chertkov O."/>
            <person name="Chi H.C."/>
            <person name="Christensen M."/>
            <person name="Clark L.M."/>
            <person name="Cohn J.D."/>
            <person name="Denys M."/>
            <person name="Detter J.C."/>
            <person name="Dickson M."/>
            <person name="Dimitrijevic-Bussod M."/>
            <person name="Escobar J."/>
            <person name="Fawcett J.J."/>
            <person name="Flowers D."/>
            <person name="Fotopulos D."/>
            <person name="Glavina T."/>
            <person name="Gomez M."/>
            <person name="Gonzales E."/>
            <person name="Goodstein D."/>
            <person name="Goodwin L.A."/>
            <person name="Grady D.L."/>
            <person name="Grigoriev I."/>
            <person name="Groza M."/>
            <person name="Hammon N."/>
            <person name="Hawkins T."/>
            <person name="Haydu L."/>
            <person name="Hildebrand C.E."/>
            <person name="Huang W."/>
            <person name="Israni S."/>
            <person name="Jett J."/>
            <person name="Jewett P.B."/>
            <person name="Kadner K."/>
            <person name="Kimball H."/>
            <person name="Kobayashi A."/>
            <person name="Krawczyk M.-C."/>
            <person name="Leyba T."/>
            <person name="Longmire J.L."/>
            <person name="Lopez F."/>
            <person name="Lou Y."/>
            <person name="Lowry S."/>
            <person name="Ludeman T."/>
            <person name="Manohar C.F."/>
            <person name="Mark G.A."/>
            <person name="McMurray K.L."/>
            <person name="Meincke L.J."/>
            <person name="Morgan J."/>
            <person name="Moyzis R.K."/>
            <person name="Mundt M.O."/>
            <person name="Munk A.C."/>
            <person name="Nandkeshwar R.D."/>
            <person name="Pitluck S."/>
            <person name="Pollard M."/>
            <person name="Predki P."/>
            <person name="Parson-Quintana B."/>
            <person name="Ramirez L."/>
            <person name="Rash S."/>
            <person name="Retterer J."/>
            <person name="Ricke D.O."/>
            <person name="Robinson D.L."/>
            <person name="Rodriguez A."/>
            <person name="Salamov A."/>
            <person name="Saunders E.H."/>
            <person name="Scott D."/>
            <person name="Shough T."/>
            <person name="Stallings R.L."/>
            <person name="Stalvey M."/>
            <person name="Sutherland R.D."/>
            <person name="Tapia R."/>
            <person name="Tesmer J.G."/>
            <person name="Thayer N."/>
            <person name="Thompson L.S."/>
            <person name="Tice H."/>
            <person name="Torney D.C."/>
            <person name="Tran-Gyamfi M."/>
            <person name="Tsai M."/>
            <person name="Ulanovsky L.E."/>
            <person name="Ustaszewska A."/>
            <person name="Vo N."/>
            <person name="White P.S."/>
            <person name="Williams A.L."/>
            <person name="Wills P.L."/>
            <person name="Wu J.-R."/>
            <person name="Wu K."/>
            <person name="Yang J."/>
            <person name="DeJong P."/>
            <person name="Bruce D."/>
            <person name="Doggett N.A."/>
            <person name="Deaven L."/>
            <person name="Schmutz J."/>
            <person name="Grimwood J."/>
            <person name="Richardson P."/>
            <person name="Rokhsar D.S."/>
            <person name="Eichler E.E."/>
            <person name="Gilna P."/>
            <person name="Lucas S.M."/>
            <person name="Myers R.M."/>
            <person name="Rubin E.M."/>
            <person name="Pennacchio L.A."/>
        </authorList>
    </citation>
    <scope>NUCLEOTIDE SEQUENCE [LARGE SCALE GENOMIC DNA]</scope>
</reference>
<reference key="5">
    <citation type="journal article" date="2004" name="Genome Res.">
        <title>The status, quality, and expansion of the NIH full-length cDNA project: the Mammalian Gene Collection (MGC).</title>
        <authorList>
            <consortium name="The MGC Project Team"/>
        </authorList>
    </citation>
    <scope>NUCLEOTIDE SEQUENCE [LARGE SCALE MRNA] (ISOFORM 1)</scope>
</reference>
<reference key="6">
    <citation type="journal article" date="2011" name="BMC Syst. Biol.">
        <title>Initial characterization of the human central proteome.</title>
        <authorList>
            <person name="Burkard T.R."/>
            <person name="Planyavsky M."/>
            <person name="Kaupe I."/>
            <person name="Breitwieser F.P."/>
            <person name="Buerckstuemmer T."/>
            <person name="Bennett K.L."/>
            <person name="Superti-Furga G."/>
            <person name="Colinge J."/>
        </authorList>
    </citation>
    <scope>IDENTIFICATION BY MASS SPECTROMETRY [LARGE SCALE ANALYSIS]</scope>
</reference>
<reference key="7">
    <citation type="journal article" date="2015" name="Proteomics">
        <title>N-terminome analysis of the human mitochondrial proteome.</title>
        <authorList>
            <person name="Vaca Jacome A.S."/>
            <person name="Rabilloud T."/>
            <person name="Schaeffer-Reiss C."/>
            <person name="Rompais M."/>
            <person name="Ayoub D."/>
            <person name="Lane L."/>
            <person name="Bairoch A."/>
            <person name="Van Dorsselaer A."/>
            <person name="Carapito C."/>
        </authorList>
    </citation>
    <scope>IDENTIFICATION BY MASS SPECTROMETRY [LARGE SCALE ANALYSIS]</scope>
</reference>
<evidence type="ECO:0000250" key="1"/>
<evidence type="ECO:0000255" key="2"/>
<evidence type="ECO:0000303" key="3">
    <source>
    </source>
</evidence>
<evidence type="ECO:0000305" key="4"/>
<accession>Q8NCN5</accession>
<accession>A7E298</accession>
<accession>A8K8Y7</accession>
<accession>B3KSE1</accession>
<accession>Q6AI20</accession>
<accession>Q6AWC9</accession>
<keyword id="KW-0002">3D-structure</keyword>
<keyword id="KW-0025">Alternative splicing</keyword>
<keyword id="KW-0496">Mitochondrion</keyword>
<keyword id="KW-1267">Proteomics identification</keyword>
<keyword id="KW-1185">Reference proteome</keyword>
<keyword id="KW-0809">Transit peptide</keyword>